<gene>
    <name evidence="1" type="primary">menD</name>
    <name type="ordered locus">MAE_26640</name>
</gene>
<proteinExistence type="inferred from homology"/>
<organism>
    <name type="scientific">Microcystis aeruginosa (strain NIES-843 / IAM M-2473)</name>
    <dbReference type="NCBI Taxonomy" id="449447"/>
    <lineage>
        <taxon>Bacteria</taxon>
        <taxon>Bacillati</taxon>
        <taxon>Cyanobacteriota</taxon>
        <taxon>Cyanophyceae</taxon>
        <taxon>Oscillatoriophycideae</taxon>
        <taxon>Chroococcales</taxon>
        <taxon>Microcystaceae</taxon>
        <taxon>Microcystis</taxon>
    </lineage>
</organism>
<keyword id="KW-0460">Magnesium</keyword>
<keyword id="KW-0464">Manganese</keyword>
<keyword id="KW-0479">Metal-binding</keyword>
<keyword id="KW-0786">Thiamine pyrophosphate</keyword>
<keyword id="KW-0808">Transferase</keyword>
<feature type="chain" id="PRO_0000341773" description="2-succinyl-5-enolpyruvyl-6-hydroxy-3-cyclohexene-1-carboxylate synthase">
    <location>
        <begin position="1"/>
        <end position="569"/>
    </location>
</feature>
<comment type="function">
    <text evidence="1">Catalyzes the thiamine diphosphate-dependent decarboxylation of 2-oxoglutarate and the subsequent addition of the resulting succinic semialdehyde-thiamine pyrophosphate anion to isochorismate to yield 2-succinyl-5-enolpyruvyl-6-hydroxy-3-cyclohexene-1-carboxylate (SEPHCHC).</text>
</comment>
<comment type="catalytic activity">
    <reaction evidence="1">
        <text>isochorismate + 2-oxoglutarate + H(+) = 5-enolpyruvoyl-6-hydroxy-2-succinyl-cyclohex-3-ene-1-carboxylate + CO2</text>
        <dbReference type="Rhea" id="RHEA:25593"/>
        <dbReference type="ChEBI" id="CHEBI:15378"/>
        <dbReference type="ChEBI" id="CHEBI:16526"/>
        <dbReference type="ChEBI" id="CHEBI:16810"/>
        <dbReference type="ChEBI" id="CHEBI:29780"/>
        <dbReference type="ChEBI" id="CHEBI:58818"/>
        <dbReference type="EC" id="2.2.1.9"/>
    </reaction>
</comment>
<comment type="cofactor">
    <cofactor evidence="1">
        <name>Mg(2+)</name>
        <dbReference type="ChEBI" id="CHEBI:18420"/>
    </cofactor>
    <cofactor evidence="1">
        <name>Mn(2+)</name>
        <dbReference type="ChEBI" id="CHEBI:29035"/>
    </cofactor>
</comment>
<comment type="cofactor">
    <cofactor evidence="1">
        <name>thiamine diphosphate</name>
        <dbReference type="ChEBI" id="CHEBI:58937"/>
    </cofactor>
    <text evidence="1">Binds 1 thiamine pyrophosphate per subunit.</text>
</comment>
<comment type="pathway">
    <text evidence="1">Quinol/quinone metabolism; 1,4-dihydroxy-2-naphthoate biosynthesis; 1,4-dihydroxy-2-naphthoate from chorismate: step 2/7.</text>
</comment>
<comment type="pathway">
    <text evidence="1">Cofactor biosynthesis; phylloquinone biosynthesis.</text>
</comment>
<comment type="subunit">
    <text evidence="1">Homodimer.</text>
</comment>
<comment type="similarity">
    <text evidence="1">Belongs to the TPP enzyme family. MenD subfamily.</text>
</comment>
<reference key="1">
    <citation type="journal article" date="2007" name="DNA Res.">
        <title>Complete genomic structure of the bloom-forming toxic cyanobacterium Microcystis aeruginosa NIES-843.</title>
        <authorList>
            <person name="Kaneko T."/>
            <person name="Nakajima N."/>
            <person name="Okamoto S."/>
            <person name="Suzuki I."/>
            <person name="Tanabe Y."/>
            <person name="Tamaoki M."/>
            <person name="Nakamura Y."/>
            <person name="Kasai F."/>
            <person name="Watanabe A."/>
            <person name="Kawashima K."/>
            <person name="Kishida Y."/>
            <person name="Ono A."/>
            <person name="Shimizu Y."/>
            <person name="Takahashi C."/>
            <person name="Minami C."/>
            <person name="Fujishiro T."/>
            <person name="Kohara M."/>
            <person name="Katoh M."/>
            <person name="Nakazaki N."/>
            <person name="Nakayama S."/>
            <person name="Yamada M."/>
            <person name="Tabata S."/>
            <person name="Watanabe M.M."/>
        </authorList>
    </citation>
    <scope>NUCLEOTIDE SEQUENCE [LARGE SCALE GENOMIC DNA]</scope>
    <source>
        <strain>NIES-843 / IAM M-247</strain>
    </source>
</reference>
<name>MEND_MICAN</name>
<accession>B0JII8</accession>
<evidence type="ECO:0000255" key="1">
    <source>
        <dbReference type="HAMAP-Rule" id="MF_01659"/>
    </source>
</evidence>
<dbReference type="EC" id="2.2.1.9" evidence="1"/>
<dbReference type="EMBL" id="AP009552">
    <property type="protein sequence ID" value="BAG02486.1"/>
    <property type="molecule type" value="Genomic_DNA"/>
</dbReference>
<dbReference type="RefSeq" id="WP_012265754.1">
    <property type="nucleotide sequence ID" value="NC_010296.1"/>
</dbReference>
<dbReference type="SMR" id="B0JII8"/>
<dbReference type="STRING" id="449447.MAE_26640"/>
<dbReference type="PaxDb" id="449447-MAE_26640"/>
<dbReference type="EnsemblBacteria" id="BAG02486">
    <property type="protein sequence ID" value="BAG02486"/>
    <property type="gene ID" value="MAE_26640"/>
</dbReference>
<dbReference type="KEGG" id="mar:MAE_26640"/>
<dbReference type="PATRIC" id="fig|449447.4.peg.2437"/>
<dbReference type="eggNOG" id="COG1165">
    <property type="taxonomic scope" value="Bacteria"/>
</dbReference>
<dbReference type="HOGENOM" id="CLU_006051_3_0_3"/>
<dbReference type="BioCyc" id="MAER449447:MAE_RS11655-MONOMER"/>
<dbReference type="UniPathway" id="UPA00995"/>
<dbReference type="UniPathway" id="UPA01057">
    <property type="reaction ID" value="UER00164"/>
</dbReference>
<dbReference type="Proteomes" id="UP000001510">
    <property type="component" value="Chromosome"/>
</dbReference>
<dbReference type="GO" id="GO:0070204">
    <property type="term" value="F:2-succinyl-5-enolpyruvyl-6-hydroxy-3-cyclohexene-1-carboxylic-acid synthase activity"/>
    <property type="evidence" value="ECO:0007669"/>
    <property type="project" value="UniProtKB-UniRule"/>
</dbReference>
<dbReference type="GO" id="GO:0000287">
    <property type="term" value="F:magnesium ion binding"/>
    <property type="evidence" value="ECO:0007669"/>
    <property type="project" value="UniProtKB-UniRule"/>
</dbReference>
<dbReference type="GO" id="GO:0030145">
    <property type="term" value="F:manganese ion binding"/>
    <property type="evidence" value="ECO:0007669"/>
    <property type="project" value="UniProtKB-UniRule"/>
</dbReference>
<dbReference type="GO" id="GO:0030976">
    <property type="term" value="F:thiamine pyrophosphate binding"/>
    <property type="evidence" value="ECO:0007669"/>
    <property type="project" value="UniProtKB-UniRule"/>
</dbReference>
<dbReference type="GO" id="GO:0009234">
    <property type="term" value="P:menaquinone biosynthetic process"/>
    <property type="evidence" value="ECO:0007669"/>
    <property type="project" value="InterPro"/>
</dbReference>
<dbReference type="GO" id="GO:0042372">
    <property type="term" value="P:phylloquinone biosynthetic process"/>
    <property type="evidence" value="ECO:0007669"/>
    <property type="project" value="UniProtKB-UniRule"/>
</dbReference>
<dbReference type="CDD" id="cd07037">
    <property type="entry name" value="TPP_PYR_MenD"/>
    <property type="match status" value="1"/>
</dbReference>
<dbReference type="CDD" id="cd02009">
    <property type="entry name" value="TPP_SHCHC_synthase"/>
    <property type="match status" value="1"/>
</dbReference>
<dbReference type="Gene3D" id="3.40.50.970">
    <property type="match status" value="2"/>
</dbReference>
<dbReference type="Gene3D" id="3.40.50.1220">
    <property type="entry name" value="TPP-binding domain"/>
    <property type="match status" value="1"/>
</dbReference>
<dbReference type="HAMAP" id="MF_01659">
    <property type="entry name" value="MenD"/>
    <property type="match status" value="1"/>
</dbReference>
<dbReference type="InterPro" id="IPR004433">
    <property type="entry name" value="MenaQ_synth_MenD"/>
</dbReference>
<dbReference type="InterPro" id="IPR032264">
    <property type="entry name" value="MenD_middle"/>
</dbReference>
<dbReference type="InterPro" id="IPR029061">
    <property type="entry name" value="THDP-binding"/>
</dbReference>
<dbReference type="InterPro" id="IPR012001">
    <property type="entry name" value="Thiamin_PyroP_enz_TPP-bd_dom"/>
</dbReference>
<dbReference type="NCBIfam" id="TIGR00173">
    <property type="entry name" value="menD"/>
    <property type="match status" value="1"/>
</dbReference>
<dbReference type="PANTHER" id="PTHR42916">
    <property type="entry name" value="2-SUCCINYL-5-ENOLPYRUVYL-6-HYDROXY-3-CYCLOHEXENE-1-CARBOXYLATE SYNTHASE"/>
    <property type="match status" value="1"/>
</dbReference>
<dbReference type="PANTHER" id="PTHR42916:SF1">
    <property type="entry name" value="PROTEIN PHYLLO, CHLOROPLASTIC"/>
    <property type="match status" value="1"/>
</dbReference>
<dbReference type="Pfam" id="PF16582">
    <property type="entry name" value="TPP_enzyme_M_2"/>
    <property type="match status" value="1"/>
</dbReference>
<dbReference type="Pfam" id="PF02776">
    <property type="entry name" value="TPP_enzyme_N"/>
    <property type="match status" value="1"/>
</dbReference>
<dbReference type="PIRSF" id="PIRSF004983">
    <property type="entry name" value="MenD"/>
    <property type="match status" value="1"/>
</dbReference>
<dbReference type="SUPFAM" id="SSF52518">
    <property type="entry name" value="Thiamin diphosphate-binding fold (THDP-binding)"/>
    <property type="match status" value="2"/>
</dbReference>
<sequence>MSIDFRNLNTLWGSILVETLARLGLKIGVVSPGSRSTPLTIALARHPQIEAIPILDERSAAFFALGLAKQLYQPVVLVCTSGTATANFYPAVIEAKESHVPLLILTADRPPELRHAHAGQTIDQVKLYGNYPNWQAEISCPSANIERLRYLRQTIIHAWWRCLDPVPGVVHLNLPFRDPLAPTPDLEINNLEANFDQEAFFSHISRQNIAINHSILQINSLPSKGIIIAGLASPQNPESYCQAIADLARSQQYPILAEALSPLRNYAGLNPHLITTYDLLLRNPALRTQLTPDVVLQIGELPTSKELRTWLEEIDCPRWIIDPHPDNYDPLQGKTGHLRVNIEQLGDLFPDKTDNNREYRQLWQKFDQQARLTIDRLLAAETKLIEGKIPWLLSQYLPPRTPIFISNSMPVRYAEFFNPPSDRQIRPYFNRGANGIDGNLSTAIGIAYKNVPSLLLTGDLALLHDTNGFLIKKYFVGSLTIILINNKGGGIFQMLPIAKFDPPFEEFFATPQNIDFCQLCRTYGIDYHLISDWTDFEQKIAVLPESGIRLLEISCDRAFNTQWFLSNYV</sequence>
<protein>
    <recommendedName>
        <fullName evidence="1">2-succinyl-5-enolpyruvyl-6-hydroxy-3-cyclohexene-1-carboxylate synthase</fullName>
        <shortName evidence="1">SEPHCHC synthase</shortName>
        <ecNumber evidence="1">2.2.1.9</ecNumber>
    </recommendedName>
</protein>